<name>RSGA2_VIBVU</name>
<comment type="function">
    <text evidence="1">One of several proteins that assist in the late maturation steps of the functional core of the 30S ribosomal subunit. Helps release RbfA from mature subunits. May play a role in the assembly of ribosomal proteins into the subunit. Circularly permuted GTPase that catalyzes slow GTP hydrolysis, GTPase activity is stimulated by the 30S ribosomal subunit.</text>
</comment>
<comment type="cofactor">
    <cofactor evidence="1">
        <name>Zn(2+)</name>
        <dbReference type="ChEBI" id="CHEBI:29105"/>
    </cofactor>
    <text evidence="1">Binds 1 zinc ion per subunit.</text>
</comment>
<comment type="subunit">
    <text evidence="1">Monomer. Associates with 30S ribosomal subunit, binds 16S rRNA.</text>
</comment>
<comment type="subcellular location">
    <subcellularLocation>
        <location evidence="1">Cytoplasm</location>
    </subcellularLocation>
</comment>
<comment type="similarity">
    <text evidence="1">Belongs to the TRAFAC class YlqF/YawG GTPase family. RsgA subfamily.</text>
</comment>
<feature type="chain" id="PRO_0000171543" description="Small ribosomal subunit biogenesis GTPase RsgA 2">
    <location>
        <begin position="1"/>
        <end position="349"/>
    </location>
</feature>
<feature type="domain" description="CP-type G" evidence="2">
    <location>
        <begin position="97"/>
        <end position="252"/>
    </location>
</feature>
<feature type="binding site" evidence="1">
    <location>
        <begin position="142"/>
        <end position="145"/>
    </location>
    <ligand>
        <name>GTP</name>
        <dbReference type="ChEBI" id="CHEBI:37565"/>
    </ligand>
</feature>
<feature type="binding site" evidence="1">
    <location>
        <begin position="194"/>
        <end position="202"/>
    </location>
    <ligand>
        <name>GTP</name>
        <dbReference type="ChEBI" id="CHEBI:37565"/>
    </ligand>
</feature>
<feature type="binding site" evidence="1">
    <location>
        <position position="275"/>
    </location>
    <ligand>
        <name>Zn(2+)</name>
        <dbReference type="ChEBI" id="CHEBI:29105"/>
    </ligand>
</feature>
<feature type="binding site" evidence="1">
    <location>
        <position position="280"/>
    </location>
    <ligand>
        <name>Zn(2+)</name>
        <dbReference type="ChEBI" id="CHEBI:29105"/>
    </ligand>
</feature>
<feature type="binding site" evidence="1">
    <location>
        <position position="282"/>
    </location>
    <ligand>
        <name>Zn(2+)</name>
        <dbReference type="ChEBI" id="CHEBI:29105"/>
    </ligand>
</feature>
<feature type="binding site" evidence="1">
    <location>
        <position position="288"/>
    </location>
    <ligand>
        <name>Zn(2+)</name>
        <dbReference type="ChEBI" id="CHEBI:29105"/>
    </ligand>
</feature>
<organism>
    <name type="scientific">Vibrio vulnificus (strain CMCP6)</name>
    <dbReference type="NCBI Taxonomy" id="216895"/>
    <lineage>
        <taxon>Bacteria</taxon>
        <taxon>Pseudomonadati</taxon>
        <taxon>Pseudomonadota</taxon>
        <taxon>Gammaproteobacteria</taxon>
        <taxon>Vibrionales</taxon>
        <taxon>Vibrionaceae</taxon>
        <taxon>Vibrio</taxon>
    </lineage>
</organism>
<protein>
    <recommendedName>
        <fullName evidence="1">Small ribosomal subunit biogenesis GTPase RsgA 2</fullName>
        <ecNumber evidence="1">3.6.1.-</ecNumber>
    </recommendedName>
</protein>
<gene>
    <name evidence="1" type="primary">rsgA2</name>
    <name type="ordered locus">VV2_1239</name>
</gene>
<evidence type="ECO:0000255" key="1">
    <source>
        <dbReference type="HAMAP-Rule" id="MF_01820"/>
    </source>
</evidence>
<evidence type="ECO:0000255" key="2">
    <source>
        <dbReference type="PROSITE-ProRule" id="PRU01058"/>
    </source>
</evidence>
<reference key="1">
    <citation type="submission" date="2002-12" db="EMBL/GenBank/DDBJ databases">
        <title>Complete genome sequence of Vibrio vulnificus CMCP6.</title>
        <authorList>
            <person name="Rhee J.H."/>
            <person name="Kim S.Y."/>
            <person name="Chung S.S."/>
            <person name="Kim J.J."/>
            <person name="Moon Y.H."/>
            <person name="Jeong H."/>
            <person name="Choy H.E."/>
        </authorList>
    </citation>
    <scope>NUCLEOTIDE SEQUENCE [LARGE SCALE GENOMIC DNA]</scope>
    <source>
        <strain>CMCP6</strain>
    </source>
</reference>
<dbReference type="EC" id="3.6.1.-" evidence="1"/>
<dbReference type="EMBL" id="AE016796">
    <property type="protein sequence ID" value="AAO08136.1"/>
    <property type="molecule type" value="Genomic_DNA"/>
</dbReference>
<dbReference type="SMR" id="Q8D4Q0"/>
<dbReference type="KEGG" id="vvu:VV2_1239"/>
<dbReference type="HOGENOM" id="CLU_033617_0_1_6"/>
<dbReference type="Proteomes" id="UP000002275">
    <property type="component" value="Chromosome 2"/>
</dbReference>
<dbReference type="GO" id="GO:0005737">
    <property type="term" value="C:cytoplasm"/>
    <property type="evidence" value="ECO:0007669"/>
    <property type="project" value="UniProtKB-SubCell"/>
</dbReference>
<dbReference type="GO" id="GO:0005525">
    <property type="term" value="F:GTP binding"/>
    <property type="evidence" value="ECO:0007669"/>
    <property type="project" value="UniProtKB-UniRule"/>
</dbReference>
<dbReference type="GO" id="GO:0003924">
    <property type="term" value="F:GTPase activity"/>
    <property type="evidence" value="ECO:0007669"/>
    <property type="project" value="UniProtKB-UniRule"/>
</dbReference>
<dbReference type="GO" id="GO:0046872">
    <property type="term" value="F:metal ion binding"/>
    <property type="evidence" value="ECO:0007669"/>
    <property type="project" value="UniProtKB-KW"/>
</dbReference>
<dbReference type="GO" id="GO:0019843">
    <property type="term" value="F:rRNA binding"/>
    <property type="evidence" value="ECO:0007669"/>
    <property type="project" value="UniProtKB-KW"/>
</dbReference>
<dbReference type="GO" id="GO:0042274">
    <property type="term" value="P:ribosomal small subunit biogenesis"/>
    <property type="evidence" value="ECO:0007669"/>
    <property type="project" value="UniProtKB-UniRule"/>
</dbReference>
<dbReference type="CDD" id="cd01854">
    <property type="entry name" value="YjeQ_EngC"/>
    <property type="match status" value="1"/>
</dbReference>
<dbReference type="Gene3D" id="3.40.50.300">
    <property type="entry name" value="P-loop containing nucleotide triphosphate hydrolases"/>
    <property type="match status" value="1"/>
</dbReference>
<dbReference type="Gene3D" id="1.10.40.50">
    <property type="entry name" value="Probable gtpase engc, domain 3"/>
    <property type="match status" value="1"/>
</dbReference>
<dbReference type="HAMAP" id="MF_01820">
    <property type="entry name" value="GTPase_RsgA"/>
    <property type="match status" value="1"/>
</dbReference>
<dbReference type="InterPro" id="IPR030378">
    <property type="entry name" value="G_CP_dom"/>
</dbReference>
<dbReference type="InterPro" id="IPR027417">
    <property type="entry name" value="P-loop_NTPase"/>
</dbReference>
<dbReference type="InterPro" id="IPR004881">
    <property type="entry name" value="Ribosome_biogen_GTPase_RsgA"/>
</dbReference>
<dbReference type="InterPro" id="IPR010914">
    <property type="entry name" value="RsgA_GTPase_dom"/>
</dbReference>
<dbReference type="NCBIfam" id="TIGR00157">
    <property type="entry name" value="ribosome small subunit-dependent GTPase A"/>
    <property type="match status" value="1"/>
</dbReference>
<dbReference type="PANTHER" id="PTHR32120">
    <property type="entry name" value="SMALL RIBOSOMAL SUBUNIT BIOGENESIS GTPASE RSGA"/>
    <property type="match status" value="1"/>
</dbReference>
<dbReference type="PANTHER" id="PTHR32120:SF10">
    <property type="entry name" value="SMALL RIBOSOMAL SUBUNIT BIOGENESIS GTPASE RSGA"/>
    <property type="match status" value="1"/>
</dbReference>
<dbReference type="Pfam" id="PF03193">
    <property type="entry name" value="RsgA_GTPase"/>
    <property type="match status" value="1"/>
</dbReference>
<dbReference type="SUPFAM" id="SSF52540">
    <property type="entry name" value="P-loop containing nucleoside triphosphate hydrolases"/>
    <property type="match status" value="1"/>
</dbReference>
<dbReference type="PROSITE" id="PS50936">
    <property type="entry name" value="ENGC_GTPASE"/>
    <property type="match status" value="1"/>
</dbReference>
<dbReference type="PROSITE" id="PS51721">
    <property type="entry name" value="G_CP"/>
    <property type="match status" value="1"/>
</dbReference>
<keyword id="KW-0963">Cytoplasm</keyword>
<keyword id="KW-0342">GTP-binding</keyword>
<keyword id="KW-0378">Hydrolase</keyword>
<keyword id="KW-0479">Metal-binding</keyword>
<keyword id="KW-0547">Nucleotide-binding</keyword>
<keyword id="KW-0690">Ribosome biogenesis</keyword>
<keyword id="KW-0694">RNA-binding</keyword>
<keyword id="KW-0699">rRNA-binding</keyword>
<keyword id="KW-0862">Zinc</keyword>
<sequence length="349" mass="39302">MTSSQPYTLTQLGWKPFFQQQLTLEDYENTQICRIVAHHRSGYQLCSEQGRFHLAIHHAQPKMTVGDWVLLDEQQQFKRLLERQSELSRKAAGSKIAEQLIATNVDTLFIVCSLNDDFNLSRIERYLSIAKEAHIEPVVVLTKADLSPQAEQNITQVQQLSATLWVEAVNALDPVSVAALQPWCAKGRTVAFIGSSGVGKSTLTNTLLGEETQQTGGIREDDSKGRHTTTARSVHMIPDGALIIDTPGMRELQLADCSEGVSETFAEIETLAQHCRFKDCQHQQEPGCAVQQAIDNGTLEARRLQNYFKLLREQAYNASTFAEQRNRIKQIGKMYRHVQSDKQKLKTTY</sequence>
<accession>Q8D4Q0</accession>
<proteinExistence type="inferred from homology"/>